<dbReference type="EC" id="6.1.1.10" evidence="1"/>
<dbReference type="EMBL" id="AE016825">
    <property type="protein sequence ID" value="AAQ58881.1"/>
    <property type="molecule type" value="Genomic_DNA"/>
</dbReference>
<dbReference type="RefSeq" id="WP_011134761.1">
    <property type="nucleotide sequence ID" value="NC_005085.1"/>
</dbReference>
<dbReference type="SMR" id="Q7NYR7"/>
<dbReference type="STRING" id="243365.CV_1206"/>
<dbReference type="KEGG" id="cvi:CV_1206"/>
<dbReference type="eggNOG" id="COG0073">
    <property type="taxonomic scope" value="Bacteria"/>
</dbReference>
<dbReference type="eggNOG" id="COG0143">
    <property type="taxonomic scope" value="Bacteria"/>
</dbReference>
<dbReference type="HOGENOM" id="CLU_009710_7_0_4"/>
<dbReference type="Proteomes" id="UP000001424">
    <property type="component" value="Chromosome"/>
</dbReference>
<dbReference type="GO" id="GO:0005829">
    <property type="term" value="C:cytosol"/>
    <property type="evidence" value="ECO:0007669"/>
    <property type="project" value="TreeGrafter"/>
</dbReference>
<dbReference type="GO" id="GO:0005524">
    <property type="term" value="F:ATP binding"/>
    <property type="evidence" value="ECO:0007669"/>
    <property type="project" value="UniProtKB-UniRule"/>
</dbReference>
<dbReference type="GO" id="GO:0046872">
    <property type="term" value="F:metal ion binding"/>
    <property type="evidence" value="ECO:0007669"/>
    <property type="project" value="UniProtKB-KW"/>
</dbReference>
<dbReference type="GO" id="GO:0004825">
    <property type="term" value="F:methionine-tRNA ligase activity"/>
    <property type="evidence" value="ECO:0007669"/>
    <property type="project" value="UniProtKB-UniRule"/>
</dbReference>
<dbReference type="GO" id="GO:0000049">
    <property type="term" value="F:tRNA binding"/>
    <property type="evidence" value="ECO:0007669"/>
    <property type="project" value="UniProtKB-KW"/>
</dbReference>
<dbReference type="GO" id="GO:0006431">
    <property type="term" value="P:methionyl-tRNA aminoacylation"/>
    <property type="evidence" value="ECO:0007669"/>
    <property type="project" value="UniProtKB-UniRule"/>
</dbReference>
<dbReference type="CDD" id="cd07957">
    <property type="entry name" value="Anticodon_Ia_Met"/>
    <property type="match status" value="1"/>
</dbReference>
<dbReference type="CDD" id="cd00814">
    <property type="entry name" value="MetRS_core"/>
    <property type="match status" value="1"/>
</dbReference>
<dbReference type="CDD" id="cd02800">
    <property type="entry name" value="tRNA_bind_EcMetRS_like"/>
    <property type="match status" value="1"/>
</dbReference>
<dbReference type="FunFam" id="1.10.730.10:FF:000005">
    <property type="entry name" value="Methionine--tRNA ligase"/>
    <property type="match status" value="1"/>
</dbReference>
<dbReference type="FunFam" id="2.20.28.20:FF:000001">
    <property type="entry name" value="Methionine--tRNA ligase"/>
    <property type="match status" value="1"/>
</dbReference>
<dbReference type="FunFam" id="2.40.50.140:FF:000042">
    <property type="entry name" value="Methionine--tRNA ligase"/>
    <property type="match status" value="1"/>
</dbReference>
<dbReference type="Gene3D" id="3.40.50.620">
    <property type="entry name" value="HUPs"/>
    <property type="match status" value="1"/>
</dbReference>
<dbReference type="Gene3D" id="1.10.730.10">
    <property type="entry name" value="Isoleucyl-tRNA Synthetase, Domain 1"/>
    <property type="match status" value="1"/>
</dbReference>
<dbReference type="Gene3D" id="2.20.28.20">
    <property type="entry name" value="Methionyl-tRNA synthetase, Zn-domain"/>
    <property type="match status" value="1"/>
</dbReference>
<dbReference type="Gene3D" id="2.40.50.140">
    <property type="entry name" value="Nucleic acid-binding proteins"/>
    <property type="match status" value="1"/>
</dbReference>
<dbReference type="HAMAP" id="MF_00098">
    <property type="entry name" value="Met_tRNA_synth_type1"/>
    <property type="match status" value="1"/>
</dbReference>
<dbReference type="InterPro" id="IPR001412">
    <property type="entry name" value="aa-tRNA-synth_I_CS"/>
</dbReference>
<dbReference type="InterPro" id="IPR041872">
    <property type="entry name" value="Anticodon_Met"/>
</dbReference>
<dbReference type="InterPro" id="IPR013155">
    <property type="entry name" value="M/V/L/I-tRNA-synth_anticd-bd"/>
</dbReference>
<dbReference type="InterPro" id="IPR004495">
    <property type="entry name" value="Met-tRNA-synth_bsu_C"/>
</dbReference>
<dbReference type="InterPro" id="IPR023458">
    <property type="entry name" value="Met-tRNA_ligase_1"/>
</dbReference>
<dbReference type="InterPro" id="IPR014758">
    <property type="entry name" value="Met-tRNA_synth"/>
</dbReference>
<dbReference type="InterPro" id="IPR015413">
    <property type="entry name" value="Methionyl/Leucyl_tRNA_Synth"/>
</dbReference>
<dbReference type="InterPro" id="IPR033911">
    <property type="entry name" value="MetRS_core"/>
</dbReference>
<dbReference type="InterPro" id="IPR029038">
    <property type="entry name" value="MetRS_Zn"/>
</dbReference>
<dbReference type="InterPro" id="IPR012340">
    <property type="entry name" value="NA-bd_OB-fold"/>
</dbReference>
<dbReference type="InterPro" id="IPR014729">
    <property type="entry name" value="Rossmann-like_a/b/a_fold"/>
</dbReference>
<dbReference type="InterPro" id="IPR002547">
    <property type="entry name" value="tRNA-bd_dom"/>
</dbReference>
<dbReference type="InterPro" id="IPR009080">
    <property type="entry name" value="tRNAsynth_Ia_anticodon-bd"/>
</dbReference>
<dbReference type="NCBIfam" id="TIGR00398">
    <property type="entry name" value="metG"/>
    <property type="match status" value="1"/>
</dbReference>
<dbReference type="NCBIfam" id="TIGR00399">
    <property type="entry name" value="metG_C_term"/>
    <property type="match status" value="1"/>
</dbReference>
<dbReference type="NCBIfam" id="NF001100">
    <property type="entry name" value="PRK00133.1"/>
    <property type="match status" value="1"/>
</dbReference>
<dbReference type="PANTHER" id="PTHR45765">
    <property type="entry name" value="METHIONINE--TRNA LIGASE"/>
    <property type="match status" value="1"/>
</dbReference>
<dbReference type="PANTHER" id="PTHR45765:SF1">
    <property type="entry name" value="METHIONINE--TRNA LIGASE, CYTOPLASMIC"/>
    <property type="match status" value="1"/>
</dbReference>
<dbReference type="Pfam" id="PF08264">
    <property type="entry name" value="Anticodon_1"/>
    <property type="match status" value="1"/>
</dbReference>
<dbReference type="Pfam" id="PF09334">
    <property type="entry name" value="tRNA-synt_1g"/>
    <property type="match status" value="1"/>
</dbReference>
<dbReference type="Pfam" id="PF01588">
    <property type="entry name" value="tRNA_bind"/>
    <property type="match status" value="1"/>
</dbReference>
<dbReference type="PRINTS" id="PR01041">
    <property type="entry name" value="TRNASYNTHMET"/>
</dbReference>
<dbReference type="SUPFAM" id="SSF47323">
    <property type="entry name" value="Anticodon-binding domain of a subclass of class I aminoacyl-tRNA synthetases"/>
    <property type="match status" value="1"/>
</dbReference>
<dbReference type="SUPFAM" id="SSF57770">
    <property type="entry name" value="Methionyl-tRNA synthetase (MetRS), Zn-domain"/>
    <property type="match status" value="1"/>
</dbReference>
<dbReference type="SUPFAM" id="SSF50249">
    <property type="entry name" value="Nucleic acid-binding proteins"/>
    <property type="match status" value="1"/>
</dbReference>
<dbReference type="SUPFAM" id="SSF52374">
    <property type="entry name" value="Nucleotidylyl transferase"/>
    <property type="match status" value="1"/>
</dbReference>
<dbReference type="PROSITE" id="PS00178">
    <property type="entry name" value="AA_TRNA_LIGASE_I"/>
    <property type="match status" value="1"/>
</dbReference>
<dbReference type="PROSITE" id="PS50886">
    <property type="entry name" value="TRBD"/>
    <property type="match status" value="1"/>
</dbReference>
<comment type="function">
    <text evidence="1">Is required not only for elongation of protein synthesis but also for the initiation of all mRNA translation through initiator tRNA(fMet) aminoacylation.</text>
</comment>
<comment type="catalytic activity">
    <reaction evidence="1">
        <text>tRNA(Met) + L-methionine + ATP = L-methionyl-tRNA(Met) + AMP + diphosphate</text>
        <dbReference type="Rhea" id="RHEA:13481"/>
        <dbReference type="Rhea" id="RHEA-COMP:9667"/>
        <dbReference type="Rhea" id="RHEA-COMP:9698"/>
        <dbReference type="ChEBI" id="CHEBI:30616"/>
        <dbReference type="ChEBI" id="CHEBI:33019"/>
        <dbReference type="ChEBI" id="CHEBI:57844"/>
        <dbReference type="ChEBI" id="CHEBI:78442"/>
        <dbReference type="ChEBI" id="CHEBI:78530"/>
        <dbReference type="ChEBI" id="CHEBI:456215"/>
        <dbReference type="EC" id="6.1.1.10"/>
    </reaction>
</comment>
<comment type="cofactor">
    <cofactor evidence="1">
        <name>Zn(2+)</name>
        <dbReference type="ChEBI" id="CHEBI:29105"/>
    </cofactor>
    <text evidence="1">Binds 1 zinc ion per subunit.</text>
</comment>
<comment type="subunit">
    <text evidence="1">Homodimer.</text>
</comment>
<comment type="subcellular location">
    <subcellularLocation>
        <location evidence="1">Cytoplasm</location>
    </subcellularLocation>
</comment>
<comment type="similarity">
    <text evidence="1">Belongs to the class-I aminoacyl-tRNA synthetase family. MetG type 1 subfamily.</text>
</comment>
<reference key="1">
    <citation type="journal article" date="2003" name="Proc. Natl. Acad. Sci. U.S.A.">
        <title>The complete genome sequence of Chromobacterium violaceum reveals remarkable and exploitable bacterial adaptability.</title>
        <authorList>
            <person name="Vasconcelos A.T.R."/>
            <person name="de Almeida D.F."/>
            <person name="Hungria M."/>
            <person name="Guimaraes C.T."/>
            <person name="Antonio R.V."/>
            <person name="Almeida F.C."/>
            <person name="de Almeida L.G.P."/>
            <person name="de Almeida R."/>
            <person name="Alves-Gomes J.A."/>
            <person name="Andrade E.M."/>
            <person name="Araripe J."/>
            <person name="de Araujo M.F.F."/>
            <person name="Astolfi-Filho S."/>
            <person name="Azevedo V."/>
            <person name="Baptista A.J."/>
            <person name="Bataus L.A.M."/>
            <person name="Batista J.S."/>
            <person name="Belo A."/>
            <person name="van den Berg C."/>
            <person name="Bogo M."/>
            <person name="Bonatto S."/>
            <person name="Bordignon J."/>
            <person name="Brigido M.M."/>
            <person name="Brito C.A."/>
            <person name="Brocchi M."/>
            <person name="Burity H.A."/>
            <person name="Camargo A.A."/>
            <person name="Cardoso D.D.P."/>
            <person name="Carneiro N.P."/>
            <person name="Carraro D.M."/>
            <person name="Carvalho C.M.B."/>
            <person name="Cascardo J.C.M."/>
            <person name="Cavada B.S."/>
            <person name="Chueire L.M.O."/>
            <person name="Creczynski-Pasa T.B."/>
            <person name="Cunha-Junior N.C."/>
            <person name="Fagundes N."/>
            <person name="Falcao C.L."/>
            <person name="Fantinatti F."/>
            <person name="Farias I.P."/>
            <person name="Felipe M.S.S."/>
            <person name="Ferrari L.P."/>
            <person name="Ferro J.A."/>
            <person name="Ferro M.I.T."/>
            <person name="Franco G.R."/>
            <person name="Freitas N.S.A."/>
            <person name="Furlan L.R."/>
            <person name="Gazzinelli R.T."/>
            <person name="Gomes E.A."/>
            <person name="Goncalves P.R."/>
            <person name="Grangeiro T.B."/>
            <person name="Grattapaglia D."/>
            <person name="Grisard E.C."/>
            <person name="Hanna E.S."/>
            <person name="Jardim S.N."/>
            <person name="Laurino J."/>
            <person name="Leoi L.C.T."/>
            <person name="Lima L.F.A."/>
            <person name="Loureiro M.F."/>
            <person name="Lyra M.C.C.P."/>
            <person name="Madeira H.M.F."/>
            <person name="Manfio G.P."/>
            <person name="Maranhao A.Q."/>
            <person name="Martins W.S."/>
            <person name="di Mauro S.M.Z."/>
            <person name="de Medeiros S.R.B."/>
            <person name="Meissner R.V."/>
            <person name="Moreira M.A.M."/>
            <person name="Nascimento F.F."/>
            <person name="Nicolas M.F."/>
            <person name="Oliveira J.G."/>
            <person name="Oliveira S.C."/>
            <person name="Paixao R.F.C."/>
            <person name="Parente J.A."/>
            <person name="Pedrosa F.O."/>
            <person name="Pena S.D.J."/>
            <person name="Pereira J.O."/>
            <person name="Pereira M."/>
            <person name="Pinto L.S.R.C."/>
            <person name="Pinto L.S."/>
            <person name="Porto J.I.R."/>
            <person name="Potrich D.P."/>
            <person name="Ramalho-Neto C.E."/>
            <person name="Reis A.M.M."/>
            <person name="Rigo L.U."/>
            <person name="Rondinelli E."/>
            <person name="Santos E.B.P."/>
            <person name="Santos F.R."/>
            <person name="Schneider M.P.C."/>
            <person name="Seuanez H.N."/>
            <person name="Silva A.M.R."/>
            <person name="da Silva A.L.C."/>
            <person name="Silva D.W."/>
            <person name="Silva R."/>
            <person name="Simoes I.C."/>
            <person name="Simon D."/>
            <person name="Soares C.M.A."/>
            <person name="Soares R.B.A."/>
            <person name="Souza E.M."/>
            <person name="Souza K.R.L."/>
            <person name="Souza R.C."/>
            <person name="Steffens M.B.R."/>
            <person name="Steindel M."/>
            <person name="Teixeira S.R."/>
            <person name="Urmenyi T."/>
            <person name="Vettore A."/>
            <person name="Wassem R."/>
            <person name="Zaha A."/>
            <person name="Simpson A.J.G."/>
        </authorList>
    </citation>
    <scope>NUCLEOTIDE SEQUENCE [LARGE SCALE GENOMIC DNA]</scope>
    <source>
        <strain>ATCC 12472 / DSM 30191 / JCM 1249 / CCUG 213 / NBRC 12614 / NCIMB 9131 / NCTC 9757 / MK</strain>
    </source>
</reference>
<organism>
    <name type="scientific">Chromobacterium violaceum (strain ATCC 12472 / DSM 30191 / JCM 1249 / CCUG 213 / NBRC 12614 / NCIMB 9131 / NCTC 9757 / MK)</name>
    <dbReference type="NCBI Taxonomy" id="243365"/>
    <lineage>
        <taxon>Bacteria</taxon>
        <taxon>Pseudomonadati</taxon>
        <taxon>Pseudomonadota</taxon>
        <taxon>Betaproteobacteria</taxon>
        <taxon>Neisseriales</taxon>
        <taxon>Chromobacteriaceae</taxon>
        <taxon>Chromobacterium</taxon>
    </lineage>
</organism>
<feature type="chain" id="PRO_0000139124" description="Methionine--tRNA ligase">
    <location>
        <begin position="1"/>
        <end position="689"/>
    </location>
</feature>
<feature type="domain" description="tRNA-binding" evidence="1">
    <location>
        <begin position="585"/>
        <end position="689"/>
    </location>
</feature>
<feature type="short sequence motif" description="'HIGH' region">
    <location>
        <begin position="16"/>
        <end position="26"/>
    </location>
</feature>
<feature type="short sequence motif" description="'KMSKS' region">
    <location>
        <begin position="342"/>
        <end position="346"/>
    </location>
</feature>
<feature type="binding site" evidence="1">
    <location>
        <position position="147"/>
    </location>
    <ligand>
        <name>Zn(2+)</name>
        <dbReference type="ChEBI" id="CHEBI:29105"/>
    </ligand>
</feature>
<feature type="binding site" evidence="1">
    <location>
        <position position="150"/>
    </location>
    <ligand>
        <name>Zn(2+)</name>
        <dbReference type="ChEBI" id="CHEBI:29105"/>
    </ligand>
</feature>
<feature type="binding site" evidence="1">
    <location>
        <position position="160"/>
    </location>
    <ligand>
        <name>Zn(2+)</name>
        <dbReference type="ChEBI" id="CHEBI:29105"/>
    </ligand>
</feature>
<feature type="binding site" evidence="1">
    <location>
        <position position="163"/>
    </location>
    <ligand>
        <name>Zn(2+)</name>
        <dbReference type="ChEBI" id="CHEBI:29105"/>
    </ligand>
</feature>
<feature type="binding site" evidence="1">
    <location>
        <position position="345"/>
    </location>
    <ligand>
        <name>ATP</name>
        <dbReference type="ChEBI" id="CHEBI:30616"/>
    </ligand>
</feature>
<name>SYM_CHRVO</name>
<gene>
    <name evidence="1" type="primary">metG</name>
    <name type="ordered locus">CV_1206</name>
</gene>
<keyword id="KW-0030">Aminoacyl-tRNA synthetase</keyword>
<keyword id="KW-0067">ATP-binding</keyword>
<keyword id="KW-0963">Cytoplasm</keyword>
<keyword id="KW-0436">Ligase</keyword>
<keyword id="KW-0479">Metal-binding</keyword>
<keyword id="KW-0547">Nucleotide-binding</keyword>
<keyword id="KW-0648">Protein biosynthesis</keyword>
<keyword id="KW-1185">Reference proteome</keyword>
<keyword id="KW-0694">RNA-binding</keyword>
<keyword id="KW-0820">tRNA-binding</keyword>
<keyword id="KW-0862">Zinc</keyword>
<evidence type="ECO:0000255" key="1">
    <source>
        <dbReference type="HAMAP-Rule" id="MF_00098"/>
    </source>
</evidence>
<protein>
    <recommendedName>
        <fullName evidence="1">Methionine--tRNA ligase</fullName>
        <ecNumber evidence="1">6.1.1.10</ecNumber>
    </recommendedName>
    <alternativeName>
        <fullName evidence="1">Methionyl-tRNA synthetase</fullName>
        <shortName evidence="1">MetRS</shortName>
    </alternativeName>
</protein>
<proteinExistence type="inferred from homology"/>
<accession>Q7NYR7</accession>
<sequence length="689" mass="76912">MIRMTKRKILVTSALPYANAGLHLGHMLEQIQTDIWVRFQKMRGHECYYVCADDTHGAPIMLAAEKRGITPEQLVNEVRELHVADSQGFLIGHDNYYSTNSPENKALAEQVYLALKADDKIACRTIEQLFDPEKQMFLPDRFVKGECPKCSAKDQYGDNCEVCGATYAPTELKNPYSAVSGAKPVLKTSEHFFFRLGECADFLKAWTSGASRRADGAVQPHLQPESLNKMNEWIGGGLQDWDISRDAPYFGFEIPGAPGKYFYVWLDAPIGYMASFKNLCERLNLNFDEWFAKDSQTEMYHFIGKDILYFHALFWPAMLNYSGLRAPTGVFAHGFLTVDGQKMSKSRGTFIQAKSYLDCGLNPEWMRYYIAAKLNGRIEDIDLNLNDFVARVNSDLVGKFVNIASRSAGFIAKRFDGMLAAQVSDGEILAKLQAAAEELAAAYEAREYAKALRDVMALADIVNGYVDANKPWELAKQEGQDARLQDVCTVLVNAFRLLAIYLKPVLPKLAEGVEAFLDVAPLSWHDAETLLLGKKINAYQHLMQRIDPALIDKLIEANKQNMQAIQDAPAAAAHEPLAETIKIDDFAKVDLRVGKVLECNFVEGSDKLLQFKVDLGFETRNIFSGIRKAYQEPEKLVGRHVIVVANLAERKMRFGVSQGMIVCASGVDDSEGLFLLDVDAGVKPGMRVG</sequence>